<name>PBPA_RICBR</name>
<sequence length="791" mass="88946">MYKSLFFCLKILALLFLIGCGIVAYIIYYYSRDLPDYRQLARYYPPSVTRIYSRDGKLMEEYAFERRVFIPINSIPTSLKESFIAAEDKNFYNHQGVDLFGIVRAAFLNISNFLHHRRMEGASTITQQVVKNFLLTNEVSFQRKIKEAILSYMISRVFTKDQILELYLNQTFFGRGAYGVATAAQNYFNKSVEELTIAESAFIAALPKAPSELNPEKNYARVKARRDYVIMRMLEDGYITSDAAKEAVDSPITLRKRDQDETVTADYYAEQVRDEVIKMLGSKDEFYTSGLTIITSLDAKMQKFAEESLRKGLRDFDRKRGFRKAIATISLDNWQEELKKLPTTPSLLEYKIAVVLEVTDTQAEIGFASGAKSKIPISEMKWAKSELKSAKKLLTKGDVIVVEPVKDYYALRQIPEVNGAIMVMNPNTGQVLTSVGGYDFFASKFDRVTQALRQPGSLSKTFVYLAALENGVKPNQIFNDGPIEISQGPGMPSWRPKNYEGKFLGPITMRTGLEKSRNLVTVRVATAVGLTKIVDIIKRFGINDNPQKVYSMVLGSIETTLERITNAYGIIANGGKRIKPHFVELIKDRNGKVIYRRDDRECTTCNVSDNDLDNAILEIPAENIYMVTDAASDYQITSLLTGVVDRGTAYSAKKLGKVIGGKTGTSNDSKDTWFIGFTPKIVVGSYVGYDTPRTLGRRATGSSVVLPIFIDFMSNAYKDEPPLPFKVPDSVKLQAVDRATGQITPSGSVMEAFKINNILIIEDDSEIIDNNHNNDVFDYVPTEKDQSQEIY</sequence>
<dbReference type="EC" id="2.4.99.28" evidence="2"/>
<dbReference type="EC" id="3.4.16.4" evidence="2"/>
<dbReference type="EMBL" id="CP000087">
    <property type="protein sequence ID" value="ABE04189.1"/>
    <property type="molecule type" value="Genomic_DNA"/>
</dbReference>
<dbReference type="RefSeq" id="WP_011476804.1">
    <property type="nucleotide sequence ID" value="NC_007940.1"/>
</dbReference>
<dbReference type="SMR" id="Q1RKC5"/>
<dbReference type="CAZy" id="GT51">
    <property type="family name" value="Glycosyltransferase Family 51"/>
</dbReference>
<dbReference type="KEGG" id="rbe:RBE_0108"/>
<dbReference type="eggNOG" id="COG5009">
    <property type="taxonomic scope" value="Bacteria"/>
</dbReference>
<dbReference type="HOGENOM" id="CLU_006354_2_4_5"/>
<dbReference type="OrthoDB" id="9766909at2"/>
<dbReference type="UniPathway" id="UPA00219"/>
<dbReference type="Proteomes" id="UP000001951">
    <property type="component" value="Chromosome"/>
</dbReference>
<dbReference type="GO" id="GO:0030288">
    <property type="term" value="C:outer membrane-bounded periplasmic space"/>
    <property type="evidence" value="ECO:0007669"/>
    <property type="project" value="TreeGrafter"/>
</dbReference>
<dbReference type="GO" id="GO:0005886">
    <property type="term" value="C:plasma membrane"/>
    <property type="evidence" value="ECO:0007669"/>
    <property type="project" value="UniProtKB-SubCell"/>
</dbReference>
<dbReference type="GO" id="GO:0008658">
    <property type="term" value="F:penicillin binding"/>
    <property type="evidence" value="ECO:0007669"/>
    <property type="project" value="InterPro"/>
</dbReference>
<dbReference type="GO" id="GO:0008955">
    <property type="term" value="F:peptidoglycan glycosyltransferase activity"/>
    <property type="evidence" value="ECO:0007669"/>
    <property type="project" value="RHEA"/>
</dbReference>
<dbReference type="GO" id="GO:0009002">
    <property type="term" value="F:serine-type D-Ala-D-Ala carboxypeptidase activity"/>
    <property type="evidence" value="ECO:0007669"/>
    <property type="project" value="UniProtKB-EC"/>
</dbReference>
<dbReference type="GO" id="GO:0071555">
    <property type="term" value="P:cell wall organization"/>
    <property type="evidence" value="ECO:0007669"/>
    <property type="project" value="UniProtKB-KW"/>
</dbReference>
<dbReference type="GO" id="GO:0009252">
    <property type="term" value="P:peptidoglycan biosynthetic process"/>
    <property type="evidence" value="ECO:0007669"/>
    <property type="project" value="UniProtKB-UniPathway"/>
</dbReference>
<dbReference type="GO" id="GO:0006508">
    <property type="term" value="P:proteolysis"/>
    <property type="evidence" value="ECO:0007669"/>
    <property type="project" value="UniProtKB-KW"/>
</dbReference>
<dbReference type="GO" id="GO:0008360">
    <property type="term" value="P:regulation of cell shape"/>
    <property type="evidence" value="ECO:0007669"/>
    <property type="project" value="UniProtKB-KW"/>
</dbReference>
<dbReference type="GO" id="GO:0046677">
    <property type="term" value="P:response to antibiotic"/>
    <property type="evidence" value="ECO:0007669"/>
    <property type="project" value="UniProtKB-KW"/>
</dbReference>
<dbReference type="FunFam" id="1.10.3810.10:FF:000003">
    <property type="entry name" value="Penicillin-binding protein 1a"/>
    <property type="match status" value="1"/>
</dbReference>
<dbReference type="Gene3D" id="1.10.3810.10">
    <property type="entry name" value="Biosynthetic peptidoglycan transglycosylase-like"/>
    <property type="match status" value="1"/>
</dbReference>
<dbReference type="Gene3D" id="3.40.710.10">
    <property type="entry name" value="DD-peptidase/beta-lactamase superfamily"/>
    <property type="match status" value="2"/>
</dbReference>
<dbReference type="InterPro" id="IPR012338">
    <property type="entry name" value="Beta-lactam/transpept-like"/>
</dbReference>
<dbReference type="InterPro" id="IPR001264">
    <property type="entry name" value="Glyco_trans_51"/>
</dbReference>
<dbReference type="InterPro" id="IPR050396">
    <property type="entry name" value="Glycosyltr_51/Transpeptidase"/>
</dbReference>
<dbReference type="InterPro" id="IPR023346">
    <property type="entry name" value="Lysozyme-like_dom_sf"/>
</dbReference>
<dbReference type="InterPro" id="IPR036950">
    <property type="entry name" value="PBP_transglycosylase"/>
</dbReference>
<dbReference type="InterPro" id="IPR031376">
    <property type="entry name" value="PCB_OB"/>
</dbReference>
<dbReference type="InterPro" id="IPR001460">
    <property type="entry name" value="PCN-bd_Tpept"/>
</dbReference>
<dbReference type="NCBIfam" id="TIGR02074">
    <property type="entry name" value="PBP_1a_fam"/>
    <property type="match status" value="1"/>
</dbReference>
<dbReference type="PANTHER" id="PTHR32282">
    <property type="entry name" value="BINDING PROTEIN TRANSPEPTIDASE, PUTATIVE-RELATED"/>
    <property type="match status" value="1"/>
</dbReference>
<dbReference type="PANTHER" id="PTHR32282:SF27">
    <property type="entry name" value="PENICILLIN-BINDING PROTEIN 1A"/>
    <property type="match status" value="1"/>
</dbReference>
<dbReference type="Pfam" id="PF17092">
    <property type="entry name" value="PCB_OB"/>
    <property type="match status" value="1"/>
</dbReference>
<dbReference type="Pfam" id="PF00912">
    <property type="entry name" value="Transgly"/>
    <property type="match status" value="1"/>
</dbReference>
<dbReference type="Pfam" id="PF00905">
    <property type="entry name" value="Transpeptidase"/>
    <property type="match status" value="1"/>
</dbReference>
<dbReference type="SUPFAM" id="SSF56601">
    <property type="entry name" value="beta-lactamase/transpeptidase-like"/>
    <property type="match status" value="1"/>
</dbReference>
<dbReference type="SUPFAM" id="SSF53955">
    <property type="entry name" value="Lysozyme-like"/>
    <property type="match status" value="1"/>
</dbReference>
<gene>
    <name type="primary">mrcA</name>
    <name type="synonym">ponA</name>
    <name type="ordered locus">RBE_0108</name>
</gene>
<keyword id="KW-0046">Antibiotic resistance</keyword>
<keyword id="KW-0121">Carboxypeptidase</keyword>
<keyword id="KW-0997">Cell inner membrane</keyword>
<keyword id="KW-1003">Cell membrane</keyword>
<keyword id="KW-0133">Cell shape</keyword>
<keyword id="KW-0961">Cell wall biogenesis/degradation</keyword>
<keyword id="KW-0328">Glycosyltransferase</keyword>
<keyword id="KW-0378">Hydrolase</keyword>
<keyword id="KW-0472">Membrane</keyword>
<keyword id="KW-0511">Multifunctional enzyme</keyword>
<keyword id="KW-0573">Peptidoglycan synthesis</keyword>
<keyword id="KW-0645">Protease</keyword>
<keyword id="KW-0735">Signal-anchor</keyword>
<keyword id="KW-0808">Transferase</keyword>
<keyword id="KW-0812">Transmembrane</keyword>
<keyword id="KW-1133">Transmembrane helix</keyword>
<accession>Q1RKC5</accession>
<protein>
    <recommendedName>
        <fullName>Penicillin-binding protein 1A</fullName>
        <shortName>PBP-1a</shortName>
        <shortName>PBP1a</shortName>
    </recommendedName>
    <domain>
        <recommendedName>
            <fullName>Penicillin-insensitive transglycosylase</fullName>
            <ecNumber evidence="2">2.4.99.28</ecNumber>
        </recommendedName>
        <alternativeName>
            <fullName>Peptidoglycan TGase</fullName>
        </alternativeName>
    </domain>
    <domain>
        <recommendedName>
            <fullName>Penicillin-sensitive transpeptidase</fullName>
            <ecNumber evidence="2">3.4.16.4</ecNumber>
        </recommendedName>
        <alternativeName>
            <fullName>DD-transpeptidase</fullName>
        </alternativeName>
    </domain>
</protein>
<feature type="chain" id="PRO_0000286450" description="Penicillin-binding protein 1A">
    <location>
        <begin position="1"/>
        <end position="791"/>
    </location>
</feature>
<feature type="topological domain" description="Cytoplasmic" evidence="4">
    <location>
        <begin position="1"/>
        <end position="6"/>
    </location>
</feature>
<feature type="transmembrane region" description="Helical; Signal-anchor for type II membrane protein" evidence="4">
    <location>
        <begin position="7"/>
        <end position="27"/>
    </location>
</feature>
<feature type="topological domain" description="Periplasmic" evidence="4">
    <location>
        <begin position="28"/>
        <end position="791"/>
    </location>
</feature>
<feature type="region of interest" description="Transglycosylase">
    <location>
        <begin position="49"/>
        <end position="220"/>
    </location>
</feature>
<feature type="region of interest" description="Transpeptidase">
    <location>
        <begin position="398"/>
        <end position="711"/>
    </location>
</feature>
<feature type="active site" description="Proton donor; for transglycosylase activity" evidence="3">
    <location>
        <position position="87"/>
    </location>
</feature>
<feature type="active site" description="Acyl-ester intermediate; for transpeptidase activity" evidence="3">
    <location>
        <position position="457"/>
    </location>
</feature>
<evidence type="ECO:0000250" key="1"/>
<evidence type="ECO:0000250" key="2">
    <source>
        <dbReference type="UniProtKB" id="P02918"/>
    </source>
</evidence>
<evidence type="ECO:0000250" key="3">
    <source>
        <dbReference type="UniProtKB" id="P02919"/>
    </source>
</evidence>
<evidence type="ECO:0000255" key="4"/>
<evidence type="ECO:0000305" key="5"/>
<organism>
    <name type="scientific">Rickettsia bellii (strain RML369-C)</name>
    <dbReference type="NCBI Taxonomy" id="336407"/>
    <lineage>
        <taxon>Bacteria</taxon>
        <taxon>Pseudomonadati</taxon>
        <taxon>Pseudomonadota</taxon>
        <taxon>Alphaproteobacteria</taxon>
        <taxon>Rickettsiales</taxon>
        <taxon>Rickettsiaceae</taxon>
        <taxon>Rickettsieae</taxon>
        <taxon>Rickettsia</taxon>
        <taxon>belli group</taxon>
    </lineage>
</organism>
<reference key="1">
    <citation type="journal article" date="2006" name="PLoS Genet.">
        <title>Genome sequence of Rickettsia bellii illuminates the role of amoebae in gene exchanges between intracellular pathogens.</title>
        <authorList>
            <person name="Ogata H."/>
            <person name="La Scola B."/>
            <person name="Audic S."/>
            <person name="Renesto P."/>
            <person name="Blanc G."/>
            <person name="Robert C."/>
            <person name="Fournier P.-E."/>
            <person name="Claverie J.-M."/>
            <person name="Raoult D."/>
        </authorList>
    </citation>
    <scope>NUCLEOTIDE SEQUENCE [LARGE SCALE GENOMIC DNA]</scope>
    <source>
        <strain>RML369-C</strain>
    </source>
</reference>
<proteinExistence type="inferred from homology"/>
<comment type="function">
    <text evidence="1">Cell wall formation. Synthesis of cross-linked peptidoglycan from the lipid intermediates. The enzyme has a penicillin-insensitive transglycosylase N-terminal domain (formation of linear glycan strands) and a penicillin-sensitive transpeptidase C-terminal domain (cross-linking of the peptide subunits).</text>
</comment>
<comment type="catalytic activity">
    <reaction evidence="2">
        <text>[GlcNAc-(1-&gt;4)-Mur2Ac(oyl-L-Ala-gamma-D-Glu-L-Lys-D-Ala-D-Ala)](n)-di-trans,octa-cis-undecaprenyl diphosphate + beta-D-GlcNAc-(1-&gt;4)-Mur2Ac(oyl-L-Ala-gamma-D-Glu-L-Lys-D-Ala-D-Ala)-di-trans,octa-cis-undecaprenyl diphosphate = [GlcNAc-(1-&gt;4)-Mur2Ac(oyl-L-Ala-gamma-D-Glu-L-Lys-D-Ala-D-Ala)](n+1)-di-trans,octa-cis-undecaprenyl diphosphate + di-trans,octa-cis-undecaprenyl diphosphate + H(+)</text>
        <dbReference type="Rhea" id="RHEA:23708"/>
        <dbReference type="Rhea" id="RHEA-COMP:9602"/>
        <dbReference type="Rhea" id="RHEA-COMP:9603"/>
        <dbReference type="ChEBI" id="CHEBI:15378"/>
        <dbReference type="ChEBI" id="CHEBI:58405"/>
        <dbReference type="ChEBI" id="CHEBI:60033"/>
        <dbReference type="ChEBI" id="CHEBI:78435"/>
        <dbReference type="EC" id="2.4.99.28"/>
    </reaction>
</comment>
<comment type="catalytic activity">
    <reaction evidence="2">
        <text>Preferential cleavage: (Ac)2-L-Lys-D-Ala-|-D-Ala. Also transpeptidation of peptidyl-alanyl moieties that are N-acyl substituents of D-alanine.</text>
        <dbReference type="EC" id="3.4.16.4"/>
    </reaction>
</comment>
<comment type="pathway">
    <text>Cell wall biogenesis; peptidoglycan biosynthesis.</text>
</comment>
<comment type="subcellular location">
    <subcellularLocation>
        <location evidence="1">Cell inner membrane</location>
        <topology evidence="1">Single-pass type II membrane protein</topology>
    </subcellularLocation>
</comment>
<comment type="similarity">
    <text evidence="5">In the N-terminal section; belongs to the glycosyltransferase 51 family.</text>
</comment>
<comment type="similarity">
    <text evidence="5">In the C-terminal section; belongs to the transpeptidase family.</text>
</comment>